<gene>
    <name type="primary">URA3</name>
</gene>
<proteinExistence type="inferred from homology"/>
<feature type="chain" id="PRO_0000134666" description="Orotidine 5'-phosphate decarboxylase">
    <location>
        <begin position="1"/>
        <end position="268"/>
    </location>
</feature>
<feature type="active site" description="Proton donor" evidence="2">
    <location>
        <position position="95"/>
    </location>
</feature>
<feature type="binding site" evidence="1">
    <location>
        <position position="39"/>
    </location>
    <ligand>
        <name>substrate</name>
    </ligand>
</feature>
<feature type="binding site" evidence="1">
    <location>
        <begin position="61"/>
        <end position="63"/>
    </location>
    <ligand>
        <name>substrate</name>
    </ligand>
</feature>
<feature type="binding site" evidence="1">
    <location>
        <begin position="93"/>
        <end position="102"/>
    </location>
    <ligand>
        <name>substrate</name>
    </ligand>
</feature>
<feature type="binding site" evidence="1">
    <location>
        <position position="219"/>
    </location>
    <ligand>
        <name>substrate</name>
    </ligand>
</feature>
<feature type="binding site" evidence="1">
    <location>
        <position position="237"/>
    </location>
    <ligand>
        <name>substrate</name>
    </ligand>
</feature>
<name>PYRF_PACTA</name>
<reference key="1">
    <citation type="submission" date="1998-02" db="EMBL/GenBank/DDBJ databases">
        <authorList>
            <person name="Clark-Walker G.D."/>
        </authorList>
    </citation>
    <scope>NUCLEOTIDE SEQUENCE [GENOMIC DNA]</scope>
</reference>
<evidence type="ECO:0000250" key="1"/>
<evidence type="ECO:0000255" key="2">
    <source>
        <dbReference type="PROSITE-ProRule" id="PRU10110"/>
    </source>
</evidence>
<evidence type="ECO:0000305" key="3"/>
<comment type="catalytic activity">
    <reaction evidence="2">
        <text>orotidine 5'-phosphate + H(+) = UMP + CO2</text>
        <dbReference type="Rhea" id="RHEA:11596"/>
        <dbReference type="ChEBI" id="CHEBI:15378"/>
        <dbReference type="ChEBI" id="CHEBI:16526"/>
        <dbReference type="ChEBI" id="CHEBI:57538"/>
        <dbReference type="ChEBI" id="CHEBI:57865"/>
        <dbReference type="EC" id="4.1.1.23"/>
    </reaction>
</comment>
<comment type="pathway">
    <text>Pyrimidine metabolism; UMP biosynthesis via de novo pathway; UMP from orotate: step 2/2.</text>
</comment>
<comment type="similarity">
    <text evidence="3">Belongs to the OMP decarboxylase family.</text>
</comment>
<accession>O93864</accession>
<organism>
    <name type="scientific">Pachysolen tannophilus</name>
    <name type="common">Yeast</name>
    <dbReference type="NCBI Taxonomy" id="4918"/>
    <lineage>
        <taxon>Eukaryota</taxon>
        <taxon>Fungi</taxon>
        <taxon>Dikarya</taxon>
        <taxon>Ascomycota</taxon>
        <taxon>Saccharomycotina</taxon>
        <taxon>Pichiomycetes</taxon>
        <taxon>Pachysolenaceae</taxon>
        <taxon>Pachysolen</taxon>
    </lineage>
</organism>
<keyword id="KW-0210">Decarboxylase</keyword>
<keyword id="KW-0456">Lyase</keyword>
<keyword id="KW-0665">Pyrimidine biosynthesis</keyword>
<dbReference type="EC" id="4.1.1.23"/>
<dbReference type="EMBL" id="AF047170">
    <property type="protein sequence ID" value="AAD02431.1"/>
    <property type="molecule type" value="Genomic_DNA"/>
</dbReference>
<dbReference type="SMR" id="O93864"/>
<dbReference type="UniPathway" id="UPA00070">
    <property type="reaction ID" value="UER00120"/>
</dbReference>
<dbReference type="GO" id="GO:0004588">
    <property type="term" value="F:orotate phosphoribosyltransferase activity"/>
    <property type="evidence" value="ECO:0007669"/>
    <property type="project" value="TreeGrafter"/>
</dbReference>
<dbReference type="GO" id="GO:0004590">
    <property type="term" value="F:orotidine-5'-phosphate decarboxylase activity"/>
    <property type="evidence" value="ECO:0007669"/>
    <property type="project" value="UniProtKB-EC"/>
</dbReference>
<dbReference type="GO" id="GO:0006207">
    <property type="term" value="P:'de novo' pyrimidine nucleobase biosynthetic process"/>
    <property type="evidence" value="ECO:0007669"/>
    <property type="project" value="InterPro"/>
</dbReference>
<dbReference type="GO" id="GO:0044205">
    <property type="term" value="P:'de novo' UMP biosynthetic process"/>
    <property type="evidence" value="ECO:0007669"/>
    <property type="project" value="UniProtKB-UniPathway"/>
</dbReference>
<dbReference type="CDD" id="cd04725">
    <property type="entry name" value="OMP_decarboxylase_like"/>
    <property type="match status" value="1"/>
</dbReference>
<dbReference type="FunFam" id="3.20.20.70:FF:000114">
    <property type="entry name" value="Decarboxylase,orotidine phosphate"/>
    <property type="match status" value="1"/>
</dbReference>
<dbReference type="Gene3D" id="3.20.20.70">
    <property type="entry name" value="Aldolase class I"/>
    <property type="match status" value="1"/>
</dbReference>
<dbReference type="InterPro" id="IPR013785">
    <property type="entry name" value="Aldolase_TIM"/>
</dbReference>
<dbReference type="InterPro" id="IPR014732">
    <property type="entry name" value="OMPdecase"/>
</dbReference>
<dbReference type="InterPro" id="IPR018089">
    <property type="entry name" value="OMPdecase_AS"/>
</dbReference>
<dbReference type="InterPro" id="IPR001754">
    <property type="entry name" value="OMPdeCOase_dom"/>
</dbReference>
<dbReference type="InterPro" id="IPR011060">
    <property type="entry name" value="RibuloseP-bd_barrel"/>
</dbReference>
<dbReference type="NCBIfam" id="TIGR01740">
    <property type="entry name" value="pyrF"/>
    <property type="match status" value="1"/>
</dbReference>
<dbReference type="PANTHER" id="PTHR19278">
    <property type="entry name" value="OROTATE PHOSPHORIBOSYLTRANSFERASE"/>
    <property type="match status" value="1"/>
</dbReference>
<dbReference type="PANTHER" id="PTHR19278:SF9">
    <property type="entry name" value="URIDINE 5'-MONOPHOSPHATE SYNTHASE"/>
    <property type="match status" value="1"/>
</dbReference>
<dbReference type="Pfam" id="PF00215">
    <property type="entry name" value="OMPdecase"/>
    <property type="match status" value="1"/>
</dbReference>
<dbReference type="SMART" id="SM00934">
    <property type="entry name" value="OMPdecase"/>
    <property type="match status" value="1"/>
</dbReference>
<dbReference type="SUPFAM" id="SSF51366">
    <property type="entry name" value="Ribulose-phoshate binding barrel"/>
    <property type="match status" value="1"/>
</dbReference>
<dbReference type="PROSITE" id="PS00156">
    <property type="entry name" value="OMPDECASE"/>
    <property type="match status" value="1"/>
</dbReference>
<sequence>MAVLDVSYGERAKVHASPVARRLFELMEKKQSNLCASIDVSSTDELLKLVEKLGPVICLVKTHIDTIDDFSYDGTILPLVELSKKYNFMIFEDRKFADIGNTVKNQYKNGIFKIAQWADITNAHGVTGEGIVKGLKEAALETTLEPRGLLMLAELSSKGSLAYGEYTNKTVEIAKSDKDFVIGFIAQHDMGGREEGFDWIIMTPGVGLDDKGDKLGQQYRTVDQVIDSGSDIIIVGRGLFGKGRDPVLQGERYRKAGWDAYLKRIGQL</sequence>
<protein>
    <recommendedName>
        <fullName>Orotidine 5'-phosphate decarboxylase</fullName>
        <ecNumber>4.1.1.23</ecNumber>
    </recommendedName>
    <alternativeName>
        <fullName>OMP decarboxylase</fullName>
        <shortName>OMPDCase</shortName>
        <shortName>OMPdecase</shortName>
    </alternativeName>
    <alternativeName>
        <fullName>Uridine 5'-monophosphate synthase</fullName>
        <shortName>UMP synthase</shortName>
    </alternativeName>
</protein>